<evidence type="ECO:0000250" key="1">
    <source>
        <dbReference type="UniProtKB" id="P58606"/>
    </source>
</evidence>
<evidence type="ECO:0000250" key="2">
    <source>
        <dbReference type="UniProtKB" id="P58608"/>
    </source>
</evidence>
<evidence type="ECO:0000255" key="3"/>
<evidence type="ECO:0000303" key="4">
    <source>
    </source>
</evidence>
<evidence type="ECO:0000305" key="5"/>
<evidence type="ECO:0000305" key="6">
    <source>
    </source>
</evidence>
<name>PLK6A_PLARH</name>
<comment type="function">
    <text evidence="2">Binds reversibly and blocks P/Q-type voltage-gated calcium channels (Cav).</text>
</comment>
<comment type="subcellular location">
    <subcellularLocation>
        <location evidence="6">Secreted</location>
    </subcellularLocation>
</comment>
<comment type="tissue specificity">
    <text evidence="6">Expressed by the venom gland.</text>
</comment>
<comment type="domain">
    <text evidence="5">The presence of a 'disulfide through disulfide knot' structurally defines this protein as a knottin.</text>
</comment>
<comment type="similarity">
    <text evidence="5">Belongs to the venom Ptu1-like knottin family.</text>
</comment>
<proteinExistence type="inferred from homology"/>
<feature type="signal peptide" evidence="3">
    <location>
        <begin position="1"/>
        <end position="19"/>
    </location>
</feature>
<feature type="chain" id="PRO_5025680747" description="U-reduvitoxin-Pr6a" evidence="5">
    <location>
        <begin position="20"/>
        <end position="59"/>
    </location>
</feature>
<feature type="disulfide bond" evidence="1">
    <location>
        <begin position="31"/>
        <end position="46"/>
    </location>
</feature>
<feature type="disulfide bond" evidence="1">
    <location>
        <begin position="38"/>
        <end position="51"/>
    </location>
</feature>
<feature type="disulfide bond" evidence="1">
    <location>
        <begin position="45"/>
        <end position="58"/>
    </location>
</feature>
<accession>A0A6B9L4Z7</accession>
<sequence length="59" mass="6830">MKVFLLTILLCFLIAYCAGTNIFDPDNNPMCIPQGEKCVMRDFGCCLPYQCDWMKNRCK</sequence>
<protein>
    <recommendedName>
        <fullName evidence="4">U-reduvitoxin-Pr6a</fullName>
        <shortName evidence="4">U-RDTX-Pr6a</shortName>
    </recommendedName>
</protein>
<keyword id="KW-0108">Calcium channel impairing toxin</keyword>
<keyword id="KW-1015">Disulfide bond</keyword>
<keyword id="KW-0872">Ion channel impairing toxin</keyword>
<keyword id="KW-0960">Knottin</keyword>
<keyword id="KW-0528">Neurotoxin</keyword>
<keyword id="KW-0964">Secreted</keyword>
<keyword id="KW-0732">Signal</keyword>
<keyword id="KW-0800">Toxin</keyword>
<keyword id="KW-1218">Voltage-gated calcium channel impairing toxin</keyword>
<organism>
    <name type="scientific">Platymeris rhadamanthus</name>
    <name type="common">Red spot assassin bug</name>
    <dbReference type="NCBI Taxonomy" id="1134088"/>
    <lineage>
        <taxon>Eukaryota</taxon>
        <taxon>Metazoa</taxon>
        <taxon>Ecdysozoa</taxon>
        <taxon>Arthropoda</taxon>
        <taxon>Hexapoda</taxon>
        <taxon>Insecta</taxon>
        <taxon>Pterygota</taxon>
        <taxon>Neoptera</taxon>
        <taxon>Paraneoptera</taxon>
        <taxon>Hemiptera</taxon>
        <taxon>Heteroptera</taxon>
        <taxon>Panheteroptera</taxon>
        <taxon>Cimicomorpha</taxon>
        <taxon>Reduviidae</taxon>
        <taxon>Platymeris</taxon>
    </lineage>
</organism>
<reference key="1">
    <citation type="journal article" date="2019" name="Toxins">
        <title>Missiles of mass disruption: composition and glandular origin of venom used as a projectile defensive weapon by the assassin bug Platymeris rhadamanthus.</title>
        <authorList>
            <person name="Walker A.A."/>
            <person name="Robinson S.D."/>
            <person name="Undheim E.A.B."/>
            <person name="Jin J."/>
            <person name="Han X."/>
            <person name="Fry B.G."/>
            <person name="Vetter I."/>
            <person name="King G.F."/>
        </authorList>
    </citation>
    <scope>NUCLEOTIDE SEQUENCE [MRNA]</scope>
    <source>
        <tissue>Venom gland</tissue>
    </source>
</reference>
<dbReference type="EMBL" id="MN208350">
    <property type="protein sequence ID" value="QHB21539.1"/>
    <property type="molecule type" value="mRNA"/>
</dbReference>
<dbReference type="GO" id="GO:0005576">
    <property type="term" value="C:extracellular region"/>
    <property type="evidence" value="ECO:0007669"/>
    <property type="project" value="UniProtKB-SubCell"/>
</dbReference>
<dbReference type="GO" id="GO:0005246">
    <property type="term" value="F:calcium channel regulator activity"/>
    <property type="evidence" value="ECO:0007669"/>
    <property type="project" value="UniProtKB-KW"/>
</dbReference>
<dbReference type="GO" id="GO:0090729">
    <property type="term" value="F:toxin activity"/>
    <property type="evidence" value="ECO:0007669"/>
    <property type="project" value="UniProtKB-KW"/>
</dbReference>